<keyword id="KW-0007">Acetylation</keyword>
<keyword id="KW-0090">Biological rhythms</keyword>
<keyword id="KW-0119">Carbohydrate metabolism</keyword>
<keyword id="KW-0131">Cell cycle</keyword>
<keyword id="KW-0132">Cell division</keyword>
<keyword id="KW-0963">Cytoplasm</keyword>
<keyword id="KW-0321">Glycogen metabolism</keyword>
<keyword id="KW-0378">Hydrolase</keyword>
<keyword id="KW-0464">Manganese</keyword>
<keyword id="KW-0479">Metal-binding</keyword>
<keyword id="KW-0539">Nucleus</keyword>
<keyword id="KW-0597">Phosphoprotein</keyword>
<keyword id="KW-0904">Protein phosphatase</keyword>
<keyword id="KW-1185">Reference proteome</keyword>
<protein>
    <recommendedName>
        <fullName>Serine/threonine-protein phosphatase PP1-alpha catalytic subunit</fullName>
        <shortName>PP-1A</shortName>
        <ecNumber evidence="2">3.1.3.16</ecNumber>
    </recommendedName>
</protein>
<feature type="initiator methionine" description="Removed" evidence="2">
    <location>
        <position position="1"/>
    </location>
</feature>
<feature type="chain" id="PRO_0000058773" description="Serine/threonine-protein phosphatase PP1-alpha catalytic subunit">
    <location>
        <begin position="2"/>
        <end position="330"/>
    </location>
</feature>
<feature type="region of interest" description="Disordered" evidence="5">
    <location>
        <begin position="306"/>
        <end position="330"/>
    </location>
</feature>
<feature type="active site" description="Proton donor" evidence="1">
    <location>
        <position position="125"/>
    </location>
</feature>
<feature type="binding site" evidence="2">
    <location>
        <position position="64"/>
    </location>
    <ligand>
        <name>Mn(2+)</name>
        <dbReference type="ChEBI" id="CHEBI:29035"/>
        <label>1</label>
    </ligand>
</feature>
<feature type="binding site" evidence="2">
    <location>
        <position position="64"/>
    </location>
    <ligand>
        <name>Mn(2+)</name>
        <dbReference type="ChEBI" id="CHEBI:29035"/>
        <label>2</label>
    </ligand>
</feature>
<feature type="binding site" evidence="2">
    <location>
        <position position="66"/>
    </location>
    <ligand>
        <name>Mn(2+)</name>
        <dbReference type="ChEBI" id="CHEBI:29035"/>
        <label>1</label>
    </ligand>
</feature>
<feature type="binding site" evidence="2">
    <location>
        <position position="92"/>
    </location>
    <ligand>
        <name>Mn(2+)</name>
        <dbReference type="ChEBI" id="CHEBI:29035"/>
        <label>1</label>
    </ligand>
</feature>
<feature type="binding site" evidence="2">
    <location>
        <position position="92"/>
    </location>
    <ligand>
        <name>Mn(2+)</name>
        <dbReference type="ChEBI" id="CHEBI:29035"/>
        <label>2</label>
    </ligand>
</feature>
<feature type="binding site" evidence="2">
    <location>
        <position position="124"/>
    </location>
    <ligand>
        <name>Mn(2+)</name>
        <dbReference type="ChEBI" id="CHEBI:29035"/>
        <label>2</label>
    </ligand>
</feature>
<feature type="binding site" evidence="2">
    <location>
        <position position="173"/>
    </location>
    <ligand>
        <name>Mn(2+)</name>
        <dbReference type="ChEBI" id="CHEBI:29035"/>
        <label>2</label>
    </ligand>
</feature>
<feature type="binding site" evidence="2">
    <location>
        <position position="248"/>
    </location>
    <ligand>
        <name>Mn(2+)</name>
        <dbReference type="ChEBI" id="CHEBI:29035"/>
        <label>2</label>
    </ligand>
</feature>
<feature type="modified residue" description="N-acetylserine" evidence="2">
    <location>
        <position position="2"/>
    </location>
</feature>
<feature type="modified residue" description="Phosphoserine" evidence="2">
    <location>
        <position position="2"/>
    </location>
</feature>
<feature type="modified residue" description="Phosphoserine" evidence="2">
    <location>
        <position position="22"/>
    </location>
</feature>
<feature type="modified residue" description="N6-acetyllysine" evidence="3">
    <location>
        <position position="305"/>
    </location>
</feature>
<feature type="modified residue" description="Phosphotyrosine" evidence="3">
    <location>
        <position position="306"/>
    </location>
</feature>
<feature type="modified residue" description="Phosphothreonine" evidence="2">
    <location>
        <position position="320"/>
    </location>
</feature>
<feature type="modified residue" description="Phosphoserine" evidence="2">
    <location>
        <position position="325"/>
    </location>
</feature>
<sequence>MSDSEKLNLDSIIGRLLEVQGSRPGKNVQLTENEIRGLCLKSREIFLSQPILLELEAPLKICGDIHGQYYDLLRLFEYGGFPPESNYLFLGDYVDRGKQSLETICLLLAYKIKYPENFFLLRGNHECASINRIYGFYDECKRRYNIKLWKTFTDXFNXLPIAAIVDEKIFCCHGGLSPDLQSMEQIRRIMRPTDVPDQGLLCDLLWSDPDKDVQGWGENDRGVSFTFGAEVVAKFLHKHDLDLICRAHQVVEDGYEFFAKRQLVTLFSAPNYCGEFDNAGAMMSVDETLMCSFQILKPADKNKGKYGQFSGLNPGGRPITPPRNSAKAKK</sequence>
<gene>
    <name type="primary">PPP1CA</name>
</gene>
<reference key="1">
    <citation type="submission" date="2001-11" db="EMBL/GenBank/DDBJ databases">
        <title>Cloning of catalytic subunit of protein phosphatase type 1 alpha from dog heart.</title>
        <authorList>
            <person name="Mishra S."/>
            <person name="Sabbah H.N."/>
            <person name="Gupta R.C."/>
        </authorList>
    </citation>
    <scope>NUCLEOTIDE SEQUENCE [MRNA]</scope>
    <source>
        <tissue>Heart</tissue>
    </source>
</reference>
<reference evidence="7" key="2">
    <citation type="journal article" date="2005" name="Nature">
        <title>Genome sequence, comparative analysis and haplotype structure of the domestic dog.</title>
        <authorList>
            <person name="Lindblad-Toh K."/>
            <person name="Wade C.M."/>
            <person name="Mikkelsen T.S."/>
            <person name="Karlsson E.K."/>
            <person name="Jaffe D.B."/>
            <person name="Kamal M."/>
            <person name="Clamp M."/>
            <person name="Chang J.L."/>
            <person name="Kulbokas E.J. III"/>
            <person name="Zody M.C."/>
            <person name="Mauceli E."/>
            <person name="Xie X."/>
            <person name="Breen M."/>
            <person name="Wayne R.K."/>
            <person name="Ostrander E.A."/>
            <person name="Ponting C.P."/>
            <person name="Galibert F."/>
            <person name="Smith D.R."/>
            <person name="deJong P.J."/>
            <person name="Kirkness E.F."/>
            <person name="Alvarez P."/>
            <person name="Biagi T."/>
            <person name="Brockman W."/>
            <person name="Butler J."/>
            <person name="Chin C.-W."/>
            <person name="Cook A."/>
            <person name="Cuff J."/>
            <person name="Daly M.J."/>
            <person name="DeCaprio D."/>
            <person name="Gnerre S."/>
            <person name="Grabherr M."/>
            <person name="Kellis M."/>
            <person name="Kleber M."/>
            <person name="Bardeleben C."/>
            <person name="Goodstadt L."/>
            <person name="Heger A."/>
            <person name="Hitte C."/>
            <person name="Kim L."/>
            <person name="Koepfli K.-P."/>
            <person name="Parker H.G."/>
            <person name="Pollinger J.P."/>
            <person name="Searle S.M.J."/>
            <person name="Sutter N.B."/>
            <person name="Thomas R."/>
            <person name="Webber C."/>
            <person name="Baldwin J."/>
            <person name="Abebe A."/>
            <person name="Abouelleil A."/>
            <person name="Aftuck L."/>
            <person name="Ait-Zahra M."/>
            <person name="Aldredge T."/>
            <person name="Allen N."/>
            <person name="An P."/>
            <person name="Anderson S."/>
            <person name="Antoine C."/>
            <person name="Arachchi H."/>
            <person name="Aslam A."/>
            <person name="Ayotte L."/>
            <person name="Bachantsang P."/>
            <person name="Barry A."/>
            <person name="Bayul T."/>
            <person name="Benamara M."/>
            <person name="Berlin A."/>
            <person name="Bessette D."/>
            <person name="Blitshteyn B."/>
            <person name="Bloom T."/>
            <person name="Blye J."/>
            <person name="Boguslavskiy L."/>
            <person name="Bonnet C."/>
            <person name="Boukhgalter B."/>
            <person name="Brown A."/>
            <person name="Cahill P."/>
            <person name="Calixte N."/>
            <person name="Camarata J."/>
            <person name="Cheshatsang Y."/>
            <person name="Chu J."/>
            <person name="Citroen M."/>
            <person name="Collymore A."/>
            <person name="Cooke P."/>
            <person name="Dawoe T."/>
            <person name="Daza R."/>
            <person name="Decktor K."/>
            <person name="DeGray S."/>
            <person name="Dhargay N."/>
            <person name="Dooley K."/>
            <person name="Dooley K."/>
            <person name="Dorje P."/>
            <person name="Dorjee K."/>
            <person name="Dorris L."/>
            <person name="Duffey N."/>
            <person name="Dupes A."/>
            <person name="Egbiremolen O."/>
            <person name="Elong R."/>
            <person name="Falk J."/>
            <person name="Farina A."/>
            <person name="Faro S."/>
            <person name="Ferguson D."/>
            <person name="Ferreira P."/>
            <person name="Fisher S."/>
            <person name="FitzGerald M."/>
            <person name="Foley K."/>
            <person name="Foley C."/>
            <person name="Franke A."/>
            <person name="Friedrich D."/>
            <person name="Gage D."/>
            <person name="Garber M."/>
            <person name="Gearin G."/>
            <person name="Giannoukos G."/>
            <person name="Goode T."/>
            <person name="Goyette A."/>
            <person name="Graham J."/>
            <person name="Grandbois E."/>
            <person name="Gyaltsen K."/>
            <person name="Hafez N."/>
            <person name="Hagopian D."/>
            <person name="Hagos B."/>
            <person name="Hall J."/>
            <person name="Healy C."/>
            <person name="Hegarty R."/>
            <person name="Honan T."/>
            <person name="Horn A."/>
            <person name="Houde N."/>
            <person name="Hughes L."/>
            <person name="Hunnicutt L."/>
            <person name="Husby M."/>
            <person name="Jester B."/>
            <person name="Jones C."/>
            <person name="Kamat A."/>
            <person name="Kanga B."/>
            <person name="Kells C."/>
            <person name="Khazanovich D."/>
            <person name="Kieu A.C."/>
            <person name="Kisner P."/>
            <person name="Kumar M."/>
            <person name="Lance K."/>
            <person name="Landers T."/>
            <person name="Lara M."/>
            <person name="Lee W."/>
            <person name="Leger J.-P."/>
            <person name="Lennon N."/>
            <person name="Leuper L."/>
            <person name="LeVine S."/>
            <person name="Liu J."/>
            <person name="Liu X."/>
            <person name="Lokyitsang Y."/>
            <person name="Lokyitsang T."/>
            <person name="Lui A."/>
            <person name="Macdonald J."/>
            <person name="Major J."/>
            <person name="Marabella R."/>
            <person name="Maru K."/>
            <person name="Matthews C."/>
            <person name="McDonough S."/>
            <person name="Mehta T."/>
            <person name="Meldrim J."/>
            <person name="Melnikov A."/>
            <person name="Meneus L."/>
            <person name="Mihalev A."/>
            <person name="Mihova T."/>
            <person name="Miller K."/>
            <person name="Mittelman R."/>
            <person name="Mlenga V."/>
            <person name="Mulrain L."/>
            <person name="Munson G."/>
            <person name="Navidi A."/>
            <person name="Naylor J."/>
            <person name="Nguyen T."/>
            <person name="Nguyen N."/>
            <person name="Nguyen C."/>
            <person name="Nguyen T."/>
            <person name="Nicol R."/>
            <person name="Norbu N."/>
            <person name="Norbu C."/>
            <person name="Novod N."/>
            <person name="Nyima T."/>
            <person name="Olandt P."/>
            <person name="O'Neill B."/>
            <person name="O'Neill K."/>
            <person name="Osman S."/>
            <person name="Oyono L."/>
            <person name="Patti C."/>
            <person name="Perrin D."/>
            <person name="Phunkhang P."/>
            <person name="Pierre F."/>
            <person name="Priest M."/>
            <person name="Rachupka A."/>
            <person name="Raghuraman S."/>
            <person name="Rameau R."/>
            <person name="Ray V."/>
            <person name="Raymond C."/>
            <person name="Rege F."/>
            <person name="Rise C."/>
            <person name="Rogers J."/>
            <person name="Rogov P."/>
            <person name="Sahalie J."/>
            <person name="Settipalli S."/>
            <person name="Sharpe T."/>
            <person name="Shea T."/>
            <person name="Sheehan M."/>
            <person name="Sherpa N."/>
            <person name="Shi J."/>
            <person name="Shih D."/>
            <person name="Sloan J."/>
            <person name="Smith C."/>
            <person name="Sparrow T."/>
            <person name="Stalker J."/>
            <person name="Stange-Thomann N."/>
            <person name="Stavropoulos S."/>
            <person name="Stone C."/>
            <person name="Stone S."/>
            <person name="Sykes S."/>
            <person name="Tchuinga P."/>
            <person name="Tenzing P."/>
            <person name="Tesfaye S."/>
            <person name="Thoulutsang D."/>
            <person name="Thoulutsang Y."/>
            <person name="Topham K."/>
            <person name="Topping I."/>
            <person name="Tsamla T."/>
            <person name="Vassiliev H."/>
            <person name="Venkataraman V."/>
            <person name="Vo A."/>
            <person name="Wangchuk T."/>
            <person name="Wangdi T."/>
            <person name="Weiand M."/>
            <person name="Wilkinson J."/>
            <person name="Wilson A."/>
            <person name="Yadav S."/>
            <person name="Yang S."/>
            <person name="Yang X."/>
            <person name="Young G."/>
            <person name="Yu Q."/>
            <person name="Zainoun J."/>
            <person name="Zembek L."/>
            <person name="Zimmer A."/>
            <person name="Lander E.S."/>
        </authorList>
    </citation>
    <scope>NUCLEOTIDE SEQUENCE [LARGE SCALE GENOMIC DNA]</scope>
    <source>
        <strain>Boxer</strain>
    </source>
</reference>
<name>PP1A_CANLF</name>
<dbReference type="EC" id="3.1.3.16" evidence="2"/>
<dbReference type="EMBL" id="AY062037">
    <property type="protein sequence ID" value="AAL38045.1"/>
    <property type="molecule type" value="mRNA"/>
</dbReference>
<dbReference type="FunCoup" id="Q8WMS6">
    <property type="interactions" value="2700"/>
</dbReference>
<dbReference type="STRING" id="9615.ENSCAFP00000017060"/>
<dbReference type="PaxDb" id="9615-ENSCAFP00000017060"/>
<dbReference type="Ensembl" id="ENSCAFT00805012809">
    <property type="protein sequence ID" value="ENSCAFP00805009998"/>
    <property type="gene ID" value="ENSCAFG00805006970"/>
</dbReference>
<dbReference type="InParanoid" id="Q8WMS6"/>
<dbReference type="OrthoDB" id="1930084at2759"/>
<dbReference type="Reactome" id="R-CFA-180024">
    <property type="pathway name" value="DARPP-32 events"/>
</dbReference>
<dbReference type="Proteomes" id="UP000002254">
    <property type="component" value="Chromosome 18"/>
</dbReference>
<dbReference type="Proteomes" id="UP000694429">
    <property type="component" value="Chromosome 18"/>
</dbReference>
<dbReference type="Proteomes" id="UP000694542">
    <property type="component" value="Chromosome 18"/>
</dbReference>
<dbReference type="Proteomes" id="UP000805418">
    <property type="component" value="Chromosome 18"/>
</dbReference>
<dbReference type="GO" id="GO:0005737">
    <property type="term" value="C:cytoplasm"/>
    <property type="evidence" value="ECO:0000318"/>
    <property type="project" value="GO_Central"/>
</dbReference>
<dbReference type="GO" id="GO:0005730">
    <property type="term" value="C:nucleolus"/>
    <property type="evidence" value="ECO:0007669"/>
    <property type="project" value="UniProtKB-SubCell"/>
</dbReference>
<dbReference type="GO" id="GO:0005654">
    <property type="term" value="C:nucleoplasm"/>
    <property type="evidence" value="ECO:0007669"/>
    <property type="project" value="UniProtKB-SubCell"/>
</dbReference>
<dbReference type="GO" id="GO:0005634">
    <property type="term" value="C:nucleus"/>
    <property type="evidence" value="ECO:0000318"/>
    <property type="project" value="GO_Central"/>
</dbReference>
<dbReference type="GO" id="GO:0072357">
    <property type="term" value="C:PTW/PP1 phosphatase complex"/>
    <property type="evidence" value="ECO:0000250"/>
    <property type="project" value="UniProtKB"/>
</dbReference>
<dbReference type="GO" id="GO:0005506">
    <property type="term" value="F:iron ion binding"/>
    <property type="evidence" value="ECO:0000250"/>
    <property type="project" value="UniProtKB"/>
</dbReference>
<dbReference type="GO" id="GO:0016791">
    <property type="term" value="F:phosphatase activity"/>
    <property type="evidence" value="ECO:0000250"/>
    <property type="project" value="UniProtKB"/>
</dbReference>
<dbReference type="GO" id="GO:0004722">
    <property type="term" value="F:protein serine/threonine phosphatase activity"/>
    <property type="evidence" value="ECO:0000250"/>
    <property type="project" value="UniProtKB"/>
</dbReference>
<dbReference type="GO" id="GO:0180007">
    <property type="term" value="F:RNA polymerase II CTD heptapeptide repeat S5 phosphatase activity"/>
    <property type="evidence" value="ECO:0000250"/>
    <property type="project" value="UniProtKB"/>
</dbReference>
<dbReference type="GO" id="GO:0046914">
    <property type="term" value="F:transition metal ion binding"/>
    <property type="evidence" value="ECO:0000250"/>
    <property type="project" value="UniProtKB"/>
</dbReference>
<dbReference type="GO" id="GO:0051301">
    <property type="term" value="P:cell division"/>
    <property type="evidence" value="ECO:0007669"/>
    <property type="project" value="UniProtKB-KW"/>
</dbReference>
<dbReference type="GO" id="GO:0032922">
    <property type="term" value="P:circadian regulation of gene expression"/>
    <property type="evidence" value="ECO:0000250"/>
    <property type="project" value="UniProtKB"/>
</dbReference>
<dbReference type="GO" id="GO:0043153">
    <property type="term" value="P:entrainment of circadian clock by photoperiod"/>
    <property type="evidence" value="ECO:0000250"/>
    <property type="project" value="UniProtKB"/>
</dbReference>
<dbReference type="GO" id="GO:0005977">
    <property type="term" value="P:glycogen metabolic process"/>
    <property type="evidence" value="ECO:0007669"/>
    <property type="project" value="UniProtKB-KW"/>
</dbReference>
<dbReference type="GO" id="GO:0034244">
    <property type="term" value="P:negative regulation of transcription elongation by RNA polymerase II"/>
    <property type="evidence" value="ECO:0000250"/>
    <property type="project" value="UniProtKB"/>
</dbReference>
<dbReference type="GO" id="GO:0032968">
    <property type="term" value="P:positive regulation of transcription elongation by RNA polymerase II"/>
    <property type="evidence" value="ECO:0000250"/>
    <property type="project" value="UniProtKB"/>
</dbReference>
<dbReference type="GO" id="GO:0006470">
    <property type="term" value="P:protein dephosphorylation"/>
    <property type="evidence" value="ECO:0000250"/>
    <property type="project" value="UniProtKB"/>
</dbReference>
<dbReference type="GO" id="GO:0042752">
    <property type="term" value="P:regulation of circadian rhythm"/>
    <property type="evidence" value="ECO:0000250"/>
    <property type="project" value="UniProtKB"/>
</dbReference>
<dbReference type="GO" id="GO:0001111">
    <property type="term" value="P:RNA polymerase II promoter clearance"/>
    <property type="evidence" value="ECO:0000250"/>
    <property type="project" value="UniProtKB"/>
</dbReference>
<dbReference type="CDD" id="cd07414">
    <property type="entry name" value="MPP_PP1_PPKL"/>
    <property type="match status" value="1"/>
</dbReference>
<dbReference type="FunFam" id="3.60.21.10:FF:000004">
    <property type="entry name" value="Serine/threonine-protein phosphatase"/>
    <property type="match status" value="1"/>
</dbReference>
<dbReference type="Gene3D" id="3.60.21.10">
    <property type="match status" value="1"/>
</dbReference>
<dbReference type="InterPro" id="IPR004843">
    <property type="entry name" value="Calcineurin-like_PHP_ApaH"/>
</dbReference>
<dbReference type="InterPro" id="IPR029052">
    <property type="entry name" value="Metallo-depent_PP-like"/>
</dbReference>
<dbReference type="InterPro" id="IPR050341">
    <property type="entry name" value="PP1_catalytic_subunit"/>
</dbReference>
<dbReference type="InterPro" id="IPR006186">
    <property type="entry name" value="Ser/Thr-sp_prot-phosphatase"/>
</dbReference>
<dbReference type="InterPro" id="IPR031675">
    <property type="entry name" value="STPPase_N"/>
</dbReference>
<dbReference type="PANTHER" id="PTHR11668">
    <property type="entry name" value="SERINE/THREONINE PROTEIN PHOSPHATASE"/>
    <property type="match status" value="1"/>
</dbReference>
<dbReference type="PANTHER" id="PTHR11668:SF377">
    <property type="entry name" value="SERINE_THREONINE-PROTEIN PHOSPHATASE PP1-ALPHA CATALYTIC SUBUNIT"/>
    <property type="match status" value="1"/>
</dbReference>
<dbReference type="Pfam" id="PF00149">
    <property type="entry name" value="Metallophos"/>
    <property type="match status" value="1"/>
</dbReference>
<dbReference type="Pfam" id="PF16891">
    <property type="entry name" value="STPPase_N"/>
    <property type="match status" value="1"/>
</dbReference>
<dbReference type="PRINTS" id="PR00114">
    <property type="entry name" value="STPHPHTASE"/>
</dbReference>
<dbReference type="SMART" id="SM00156">
    <property type="entry name" value="PP2Ac"/>
    <property type="match status" value="1"/>
</dbReference>
<dbReference type="SUPFAM" id="SSF56300">
    <property type="entry name" value="Metallo-dependent phosphatases"/>
    <property type="match status" value="1"/>
</dbReference>
<dbReference type="PROSITE" id="PS00125">
    <property type="entry name" value="SER_THR_PHOSPHATASE"/>
    <property type="match status" value="1"/>
</dbReference>
<organism>
    <name type="scientific">Canis lupus familiaris</name>
    <name type="common">Dog</name>
    <name type="synonym">Canis familiaris</name>
    <dbReference type="NCBI Taxonomy" id="9615"/>
    <lineage>
        <taxon>Eukaryota</taxon>
        <taxon>Metazoa</taxon>
        <taxon>Chordata</taxon>
        <taxon>Craniata</taxon>
        <taxon>Vertebrata</taxon>
        <taxon>Euteleostomi</taxon>
        <taxon>Mammalia</taxon>
        <taxon>Eutheria</taxon>
        <taxon>Laurasiatheria</taxon>
        <taxon>Carnivora</taxon>
        <taxon>Caniformia</taxon>
        <taxon>Canidae</taxon>
        <taxon>Canis</taxon>
    </lineage>
</organism>
<evidence type="ECO:0000250" key="1">
    <source>
        <dbReference type="UniProtKB" id="P36873"/>
    </source>
</evidence>
<evidence type="ECO:0000250" key="2">
    <source>
        <dbReference type="UniProtKB" id="P62136"/>
    </source>
</evidence>
<evidence type="ECO:0000250" key="3">
    <source>
        <dbReference type="UniProtKB" id="P62137"/>
    </source>
</evidence>
<evidence type="ECO:0000250" key="4">
    <source>
        <dbReference type="UniProtKB" id="P62139"/>
    </source>
</evidence>
<evidence type="ECO:0000256" key="5">
    <source>
        <dbReference type="SAM" id="MobiDB-lite"/>
    </source>
</evidence>
<evidence type="ECO:0000305" key="6"/>
<evidence type="ECO:0000312" key="7">
    <source>
        <dbReference type="Proteomes" id="UP000002254"/>
    </source>
</evidence>
<accession>Q8WMS6</accession>
<accession>A0A8C0PCF1</accession>
<accession>A0A8I3NRM8</accession>
<comment type="function">
    <text evidence="2 3">Protein phosphatase that associates with over 200 regulatory proteins to form highly specific holoenzymes which dephosphorylate hundreds of biological targets. Protein phosphatase 1 (PP1) is essential for cell division, transcription elongation, and participates in the regulation of glycogen metabolism, muscle contractility and protein synthesis. Involved in regulation of ionic conductances and long-term synaptic plasticity. May play an important role in dephosphorylating substrates such as the postsynaptic density-associated Ca(2+)/calmodulin dependent protein kinase II. Catalytic component of the PNUTS-PP1 protein phosphatase complex, a protein phosphatase 1 (PP1) complex that promotes RNA polymerase II transcription pause-release, allowing transcription elongation: the PNUTS-PP1 complex mediates the release of RNA polymerase II from promoter-proximal region of genes by catalyzing dephosphorylation of proteins involved in transcription, such as AFF4, CDK9, MEPCE, INTS12, NCBP1, POLR2M/GDOWN1 and SUPT6H. The PNUTS-PP1 complex also regulates transcription termination by mediating dephosphorylation of SUPT5H in termination zones downstream of poly(A) sites, thereby promoting deceleration of RNA polymerase II transcription. PNUTS-PP1 complex is also involved in the response to replication stress by mediating dephosphorylation of POLR2A at 'Ser-5' of the CTD, promoting RNA polymerase II degradation. PNUTS-PP1 also plays a role in the control of chromatin structure and cell cycle progression during the transition from mitosis into interphase. Regulates NEK2 function in terms of kinase activity and centrosome number and splitting, both in the presence and absence of radiation-induced DNA damage (By similarity). Regulator of neural tube and optic fissure closure, and enteric neural crest cell (ENCCs) migration during development (By similarity). In balance with CSNK1D and CSNK1E, determines the circadian period length, through the regulation of the speed and rhythmicity of PER1 and PER2 phosphorylation. May dephosphorylate CSNK1D and CSNK1E. Dephosphorylates the 'Ser-418' residue of FOXP3 in regulatory T-cells (Treg) from patients with rheumatoid arthritis, thereby inactivating FOXP3 and rendering Treg cells functionally defective. Dephosphorylates CENPA. Dephosphorylates the 'Ser-139' residue of ATG16L1 causing dissociation of ATG12-ATG5-ATG16L1 complex, thereby inhibiting autophagy. Together with PPP1CC (PP1-gamma subunit), dephosphorylates IFIH1/MDA5 and RIG-I leading to their activation and a functional innate immune response. Core component of the SHOC2-MRAS-PP1c (SMP) holophosphatase complex that regulates the MAPK pathway activation. The SMP complex specifically dephosphorylates the inhibitory phosphorylation at 'Ser-259' of RAF1 kinase, 'Ser-365' of BRAF kinase and 'Ser-214' of ARAF kinase, stimulating their kinase activities. The SMP complex enhances the dephosphorylation activity and substrate specificity of PP1c (By similarity).</text>
</comment>
<comment type="catalytic activity">
    <reaction evidence="2">
        <text>O-phospho-L-seryl-[protein] + H2O = L-seryl-[protein] + phosphate</text>
        <dbReference type="Rhea" id="RHEA:20629"/>
        <dbReference type="Rhea" id="RHEA-COMP:9863"/>
        <dbReference type="Rhea" id="RHEA-COMP:11604"/>
        <dbReference type="ChEBI" id="CHEBI:15377"/>
        <dbReference type="ChEBI" id="CHEBI:29999"/>
        <dbReference type="ChEBI" id="CHEBI:43474"/>
        <dbReference type="ChEBI" id="CHEBI:83421"/>
        <dbReference type="EC" id="3.1.3.16"/>
    </reaction>
</comment>
<comment type="catalytic activity">
    <reaction evidence="2">
        <text>O-phospho-L-threonyl-[protein] + H2O = L-threonyl-[protein] + phosphate</text>
        <dbReference type="Rhea" id="RHEA:47004"/>
        <dbReference type="Rhea" id="RHEA-COMP:11060"/>
        <dbReference type="Rhea" id="RHEA-COMP:11605"/>
        <dbReference type="ChEBI" id="CHEBI:15377"/>
        <dbReference type="ChEBI" id="CHEBI:30013"/>
        <dbReference type="ChEBI" id="CHEBI:43474"/>
        <dbReference type="ChEBI" id="CHEBI:61977"/>
        <dbReference type="EC" id="3.1.3.16"/>
    </reaction>
</comment>
<comment type="cofactor">
    <cofactor evidence="2">
        <name>Mn(2+)</name>
        <dbReference type="ChEBI" id="CHEBI:29035"/>
    </cofactor>
    <text evidence="2">Binds 2 manganese ions per subunit.</text>
</comment>
<comment type="subunit">
    <text evidence="2 3 4">PP1 comprises a catalytic subunit, PPP1CA, PPP1CB or PPP1CC, which is folded into its native form by inhibitor 2 and glycogen synthetase kinase 3, and then complexed to one or several targeting or regulatory subunits. PPP1R12A, PPP1R12B and PPP1R12C mediate binding to myosin. PPP1R3A (in skeletal muscle), PPP1R3B (in liver), PPP1R3C, PPP1R3D and PPP1R3F (in brain) mediate binding to glycogen. Interacts with PPP1R15A and PPP1R15B; the interactions mediate binding to EIF2S1. Part of a complex containing PPP1R15B, PP1 and NCK1/2. Interacts with PPP1R9A, PPP1R9B and PPP1R7. Interacts with YLPM1. Forms a complex with ILF2, ILF3, YLPM1, KHDRBS1, RBMX and NCOA5. Interacts with NOM1 and PPP1R8. Interacts with PPP1R16B. Interacts with RPSA only in the presence of PPP1R16B. Component of the PNUTS-PP1 phosphatase complex, composed of PPP1R10/PNUTS, TOX4, WDR82, and PPP1CA or PPP1CB or PPP1CC. Interacts with PPP1R10/PNUTS and PPP1R8. Interacts with WDR82 in the presence of PPP1R10/PNUTS. Interacts with PPP1R39. transition from mitosis into interphase. Interacts with TRIM28; the interaction dephosphorylates TRIM28 on 'Ser-824' and forms a complex at the p21 promoter site. Interacts with NEK2. Interacts with PHACTR4; which acts as an activator of PP1 activity. Interacts with FER; this promotes phosphorylation at Thr-320. Interacts with BTBD10. Interacts with KCTD20. Interacts with FOXP3. Interacts with CENPA. Interacts with ATG16L1. Found in a complex with PPP1CA, PPP1CC, SHC1 and PEAK1. Interacts with tensin TNS1. Interacts with SAXO4, PPP1R21, PPP1R26, PPP1R27, PPP1R35, PPP1R36, PPP1R37, SH3RF2, ELFN1 and ELFN2. Interacts with TPRN; the interaction results in inhibition of PPC1A phosphatase activity. Interacts with SKA1 (via C-terminus); the interaction is direct and required for the recruitment of PP1 to the kinetochore (By similarity). Interacts with the KNL1 complex subunit KNL1; the interaction is direct and mutually exclusive with KNL1 binding to microtubules (By similarity). Component of the SHOC2-MRAS-PP1c (SMP) complex consisting of SHOC2, GTP-bound M-Ras/MRAS and the catalytic subunit of protein phosphatase 1 (either PPP1CA, PPP1CB or PPP1CC) (By similarity). SHOC2 and PP1c preferably bind M-Ras/MRAS, but they also bind K-Ras/KRAS, N-Ras/NRAS and H-Ras/HRAS; these interactions are GTP-dependent and both SHOC2 and PP1c are required to form a stable complex (By similarity). Interacts with SHOC2 in the absence of Ras GTPases (By similarity).</text>
</comment>
<comment type="subcellular location">
    <subcellularLocation>
        <location evidence="2">Cytoplasm</location>
    </subcellularLocation>
    <subcellularLocation>
        <location evidence="2">Nucleus</location>
    </subcellularLocation>
    <subcellularLocation>
        <location evidence="2">Nucleus</location>
        <location evidence="2">Nucleoplasm</location>
    </subcellularLocation>
    <subcellularLocation>
        <location evidence="2">Nucleus</location>
        <location evidence="2">Nucleolus</location>
    </subcellularLocation>
    <text evidence="2">Primarily nuclear and largely excluded from the nucleolus. Highly mobile in cells and can be relocalized through interaction with targeting subunits. NOM1 plays a role in targeting this protein to the nucleolus. In the presence of PPP1R8 relocalizes from the nucleus to nuclear speckles.</text>
</comment>
<comment type="PTM">
    <text evidence="2">Phosphorylated. Dephosphorylated at Thr-320 in the presence of ionizing radiation.</text>
</comment>
<comment type="similarity">
    <text evidence="6">Belongs to the PPP phosphatase family. PP-1 subfamily.</text>
</comment>
<comment type="online information" name="Protein Spotlight">
    <link uri="https://www.proteinspotlight.org/back_issues/032"/>
    <text>The things we forget - Issue 32 of March 2003</text>
</comment>
<proteinExistence type="evidence at transcript level"/>